<evidence type="ECO:0000256" key="1">
    <source>
        <dbReference type="SAM" id="MobiDB-lite"/>
    </source>
</evidence>
<keyword id="KW-1185">Reference proteome</keyword>
<name>Y542_MYCPN</name>
<dbReference type="EMBL" id="U00089">
    <property type="protein sequence ID" value="AAB95948.1"/>
    <property type="molecule type" value="Genomic_DNA"/>
</dbReference>
<dbReference type="PIR" id="S73626">
    <property type="entry name" value="S73626"/>
</dbReference>
<dbReference type="RefSeq" id="NP_110231.1">
    <property type="nucleotide sequence ID" value="NC_000912.1"/>
</dbReference>
<dbReference type="RefSeq" id="WP_010874899.1">
    <property type="nucleotide sequence ID" value="NZ_OU342337.1"/>
</dbReference>
<dbReference type="IntAct" id="P75236">
    <property type="interactions" value="2"/>
</dbReference>
<dbReference type="STRING" id="272634.MPN_542"/>
<dbReference type="EnsemblBacteria" id="AAB95948">
    <property type="protein sequence ID" value="AAB95948"/>
    <property type="gene ID" value="MPN_542"/>
</dbReference>
<dbReference type="KEGG" id="mpn:MPN_542"/>
<dbReference type="PATRIC" id="fig|272634.6.peg.604"/>
<dbReference type="HOGENOM" id="CLU_095608_0_0_14"/>
<dbReference type="OrthoDB" id="399282at2"/>
<dbReference type="BioCyc" id="MPNE272634:G1GJ3-892-MONOMER"/>
<dbReference type="Proteomes" id="UP000000808">
    <property type="component" value="Chromosome"/>
</dbReference>
<dbReference type="InterPro" id="IPR035325">
    <property type="entry name" value="DUF5385"/>
</dbReference>
<dbReference type="Pfam" id="PF17359">
    <property type="entry name" value="DUF5385"/>
    <property type="match status" value="1"/>
</dbReference>
<gene>
    <name type="ordered locus">MPN_542</name>
    <name type="ORF">G12_orf218</name>
    <name type="ORF">MP300</name>
</gene>
<proteinExistence type="predicted"/>
<reference key="1">
    <citation type="journal article" date="1996" name="Nucleic Acids Res.">
        <title>Complete sequence analysis of the genome of the bacterium Mycoplasma pneumoniae.</title>
        <authorList>
            <person name="Himmelreich R."/>
            <person name="Hilbert H."/>
            <person name="Plagens H."/>
            <person name="Pirkl E."/>
            <person name="Li B.-C."/>
            <person name="Herrmann R."/>
        </authorList>
    </citation>
    <scope>NUCLEOTIDE SEQUENCE [LARGE SCALE GENOMIC DNA]</scope>
    <source>
        <strain>ATCC 29342 / M129 / Subtype 1</strain>
    </source>
</reference>
<feature type="chain" id="PRO_0000210566" description="Uncharacterized protein MG364 homolog">
    <location>
        <begin position="1"/>
        <end position="218"/>
    </location>
</feature>
<feature type="region of interest" description="Disordered" evidence="1">
    <location>
        <begin position="184"/>
        <end position="218"/>
    </location>
</feature>
<feature type="compositionally biased region" description="Basic and acidic residues" evidence="1">
    <location>
        <begin position="184"/>
        <end position="202"/>
    </location>
</feature>
<feature type="compositionally biased region" description="Basic residues" evidence="1">
    <location>
        <begin position="205"/>
        <end position="218"/>
    </location>
</feature>
<protein>
    <recommendedName>
        <fullName>Uncharacterized protein MG364 homolog</fullName>
    </recommendedName>
</protein>
<organism>
    <name type="scientific">Mycoplasma pneumoniae (strain ATCC 29342 / M129 / Subtype 1)</name>
    <name type="common">Mycoplasmoides pneumoniae</name>
    <dbReference type="NCBI Taxonomy" id="272634"/>
    <lineage>
        <taxon>Bacteria</taxon>
        <taxon>Bacillati</taxon>
        <taxon>Mycoplasmatota</taxon>
        <taxon>Mycoplasmoidales</taxon>
        <taxon>Mycoplasmoidaceae</taxon>
        <taxon>Mycoplasmoides</taxon>
    </lineage>
</organism>
<accession>P75236</accession>
<sequence length="218" mass="25572">MNGGGQQGGFFGLLVIIIPVILLIVFFSKKKNSQKTEFGGEGGSRASKKDEVWKTVKQFLQEQNERGKEIIKTFVAKNPNPLHSRKDRQFFNQEVQAYITAHNLSKTAAKRYRHEQLKLKQRELYCIYFITKDAKTSVFDEARIIEAEVYQKPNKTGKGAPERLIRILGLKNFNDEMKWIQPLMDREEKRKEKEEKRKRELAARQLKRQEKKKQKTSK</sequence>